<name>GFH1_THEAQ</name>
<keyword id="KW-0002">3D-structure</keyword>
<keyword id="KW-0175">Coiled coil</keyword>
<keyword id="KW-0804">Transcription</keyword>
<keyword id="KW-0805">Transcription regulation</keyword>
<comment type="function">
    <text evidence="3 4">Inhibits all catalytic activities of RNA polymerase (RNAP) by partially occluding its substrate-binding site and preventing NTP binding.</text>
</comment>
<comment type="subunit">
    <text evidence="4">Interacts with RNAP.</text>
</comment>
<comment type="domain">
    <text evidence="4">Inhibitory activity is regulated via a pH-induced conformational change of the structure. At pH above 7, Gfh1 is in an inactive flipped orientation that prevents binding to RNAP. At lower pH, Gfh1 switches to an active orientation, which enables binding to RNAP and inhibitory activity (Probable).</text>
</comment>
<comment type="similarity">
    <text evidence="2">Belongs to the GreA/GreB family.</text>
</comment>
<accession>Q8VQD7</accession>
<sequence length="157" mass="17228">MAREVKLTKAGYERLMKQLEQERERLQEATKILQELMESSDDYDDSGLEAAKQEKARIEARIDSLEDVLSRAVILEEGTGEVIGLGSVVELEDPATGERLSVQVVSPAEASVLENPMKISDASPMGKALLGHRVGDVLSLDTPKGKKEFRVVAIHGR</sequence>
<dbReference type="EMBL" id="AF456233">
    <property type="protein sequence ID" value="AAL57610.1"/>
    <property type="molecule type" value="Genomic_DNA"/>
</dbReference>
<dbReference type="PDB" id="2ETN">
    <property type="method" value="X-ray"/>
    <property type="resolution" value="3.30 A"/>
    <property type="chains" value="A/B/C=1-157"/>
</dbReference>
<dbReference type="PDBsum" id="2ETN"/>
<dbReference type="SMR" id="Q8VQD7"/>
<dbReference type="EvolutionaryTrace" id="Q8VQD7"/>
<dbReference type="GO" id="GO:0003677">
    <property type="term" value="F:DNA binding"/>
    <property type="evidence" value="ECO:0007669"/>
    <property type="project" value="InterPro"/>
</dbReference>
<dbReference type="GO" id="GO:0070063">
    <property type="term" value="F:RNA polymerase binding"/>
    <property type="evidence" value="ECO:0007669"/>
    <property type="project" value="InterPro"/>
</dbReference>
<dbReference type="GO" id="GO:0006354">
    <property type="term" value="P:DNA-templated transcription elongation"/>
    <property type="evidence" value="ECO:0007669"/>
    <property type="project" value="TreeGrafter"/>
</dbReference>
<dbReference type="GO" id="GO:0032784">
    <property type="term" value="P:regulation of DNA-templated transcription elongation"/>
    <property type="evidence" value="ECO:0007669"/>
    <property type="project" value="InterPro"/>
</dbReference>
<dbReference type="Gene3D" id="3.10.50.30">
    <property type="entry name" value="Transcription elongation factor, GreA/GreB, C-terminal domain"/>
    <property type="match status" value="1"/>
</dbReference>
<dbReference type="Gene3D" id="1.10.287.180">
    <property type="entry name" value="Transcription elongation factor, GreA/GreB, N-terminal domain"/>
    <property type="match status" value="1"/>
</dbReference>
<dbReference type="InterPro" id="IPR036953">
    <property type="entry name" value="GreA/GreB_C_sf"/>
</dbReference>
<dbReference type="InterPro" id="IPR018151">
    <property type="entry name" value="TF_GreA/GreB_CS"/>
</dbReference>
<dbReference type="InterPro" id="IPR001437">
    <property type="entry name" value="Tscrpt_elong_fac_GreA/B_C"/>
</dbReference>
<dbReference type="InterPro" id="IPR023459">
    <property type="entry name" value="Tscrpt_elong_fac_GreA/B_fam"/>
</dbReference>
<dbReference type="InterPro" id="IPR022691">
    <property type="entry name" value="Tscrpt_elong_fac_GreA/B_N"/>
</dbReference>
<dbReference type="InterPro" id="IPR036805">
    <property type="entry name" value="Tscrpt_elong_fac_GreA/B_N_sf"/>
</dbReference>
<dbReference type="PANTHER" id="PTHR30437">
    <property type="entry name" value="TRANSCRIPTION ELONGATION FACTOR GREA"/>
    <property type="match status" value="1"/>
</dbReference>
<dbReference type="PANTHER" id="PTHR30437:SF4">
    <property type="entry name" value="TRANSCRIPTION ELONGATION FACTOR GREA"/>
    <property type="match status" value="1"/>
</dbReference>
<dbReference type="Pfam" id="PF01272">
    <property type="entry name" value="GreA_GreB"/>
    <property type="match status" value="1"/>
</dbReference>
<dbReference type="Pfam" id="PF03449">
    <property type="entry name" value="GreA_GreB_N"/>
    <property type="match status" value="1"/>
</dbReference>
<dbReference type="PIRSF" id="PIRSF006092">
    <property type="entry name" value="GreA_GreB"/>
    <property type="match status" value="1"/>
</dbReference>
<dbReference type="SUPFAM" id="SSF54534">
    <property type="entry name" value="FKBP-like"/>
    <property type="match status" value="1"/>
</dbReference>
<dbReference type="SUPFAM" id="SSF46557">
    <property type="entry name" value="GreA transcript cleavage protein, N-terminal domain"/>
    <property type="match status" value="1"/>
</dbReference>
<dbReference type="PROSITE" id="PS00830">
    <property type="entry name" value="GREAB_2"/>
    <property type="match status" value="1"/>
</dbReference>
<organism>
    <name type="scientific">Thermus aquaticus</name>
    <dbReference type="NCBI Taxonomy" id="271"/>
    <lineage>
        <taxon>Bacteria</taxon>
        <taxon>Thermotogati</taxon>
        <taxon>Deinococcota</taxon>
        <taxon>Deinococci</taxon>
        <taxon>Thermales</taxon>
        <taxon>Thermaceae</taxon>
        <taxon>Thermus</taxon>
    </lineage>
</organism>
<feature type="chain" id="PRO_0000422247" description="Transcription inhibitor protein Gfh1">
    <location>
        <begin position="1"/>
        <end position="157"/>
    </location>
</feature>
<feature type="coiled-coil region" evidence="1">
    <location>
        <begin position="1"/>
        <end position="74"/>
    </location>
</feature>
<feature type="helix" evidence="5">
    <location>
        <begin position="9"/>
        <end position="36"/>
    </location>
</feature>
<feature type="helix" evidence="5">
    <location>
        <begin position="47"/>
        <end position="68"/>
    </location>
</feature>
<feature type="strand" evidence="5">
    <location>
        <begin position="71"/>
        <end position="73"/>
    </location>
</feature>
<feature type="strand" evidence="5">
    <location>
        <begin position="84"/>
        <end position="86"/>
    </location>
</feature>
<feature type="strand" evidence="5">
    <location>
        <begin position="88"/>
        <end position="92"/>
    </location>
</feature>
<feature type="turn" evidence="5">
    <location>
        <begin position="94"/>
        <end position="96"/>
    </location>
</feature>
<feature type="strand" evidence="5">
    <location>
        <begin position="100"/>
        <end position="105"/>
    </location>
</feature>
<feature type="helix" evidence="5">
    <location>
        <begin position="107"/>
        <end position="109"/>
    </location>
</feature>
<feature type="strand" evidence="5">
    <location>
        <begin position="111"/>
        <end position="120"/>
    </location>
</feature>
<feature type="helix" evidence="5">
    <location>
        <begin position="124"/>
        <end position="129"/>
    </location>
</feature>
<feature type="strand" evidence="5">
    <location>
        <begin position="137"/>
        <end position="141"/>
    </location>
</feature>
<feature type="strand" evidence="5">
    <location>
        <begin position="143"/>
        <end position="151"/>
    </location>
</feature>
<gene>
    <name type="primary">gfh1</name>
</gene>
<proteinExistence type="evidence at protein level"/>
<reference key="1">
    <citation type="journal article" date="2002" name="J. Biol. Chem.">
        <title>Transcript cleavage by Thermus thermophilus RNA polymerase. Effects of GreA and anti-GreA factors.</title>
        <authorList>
            <person name="Hogan B.P."/>
            <person name="Hartsch T."/>
            <person name="Erie D.A."/>
        </authorList>
    </citation>
    <scope>NUCLEOTIDE SEQUENCE [GENOMIC DNA]</scope>
    <scope>FUNCTION</scope>
    <scope>GENE NAME</scope>
</reference>
<reference key="2">
    <citation type="journal article" date="2006" name="J. Mol. Biol.">
        <title>Crystal structure of Thermus aquaticus Gfh1, a Gre-factor paralog that inhibits rather than stimulates transcript cleavage.</title>
        <authorList>
            <person name="Lamour V."/>
            <person name="Hogan B.P."/>
            <person name="Erie D.A."/>
            <person name="Darst S.A."/>
        </authorList>
    </citation>
    <scope>X-RAY CRYSTALLOGRAPHY (3.30 ANGSTROMS)</scope>
    <scope>FUNCTION</scope>
    <scope>INTERACTION WITH RNAP</scope>
    <scope>DOMAIN</scope>
</reference>
<evidence type="ECO:0000255" key="1"/>
<evidence type="ECO:0000305" key="2"/>
<evidence type="ECO:0000305" key="3">
    <source>
    </source>
</evidence>
<evidence type="ECO:0000305" key="4">
    <source>
    </source>
</evidence>
<evidence type="ECO:0007829" key="5">
    <source>
        <dbReference type="PDB" id="2ETN"/>
    </source>
</evidence>
<protein>
    <recommendedName>
        <fullName>Transcription inhibitor protein Gfh1</fullName>
    </recommendedName>
    <alternativeName>
        <fullName>Anti-cleavage anti-GreA transcription factor</fullName>
    </alternativeName>
    <alternativeName>
        <fullName>Gre factor homolog 1</fullName>
    </alternativeName>
</protein>